<feature type="chain" id="PRO_0000306544" description="Imidazolonepropionase">
    <location>
        <begin position="1"/>
        <end position="406"/>
    </location>
</feature>
<feature type="binding site" evidence="1">
    <location>
        <position position="72"/>
    </location>
    <ligand>
        <name>Fe(3+)</name>
        <dbReference type="ChEBI" id="CHEBI:29034"/>
    </ligand>
</feature>
<feature type="binding site" evidence="1">
    <location>
        <position position="72"/>
    </location>
    <ligand>
        <name>Zn(2+)</name>
        <dbReference type="ChEBI" id="CHEBI:29105"/>
    </ligand>
</feature>
<feature type="binding site" evidence="1">
    <location>
        <position position="74"/>
    </location>
    <ligand>
        <name>Fe(3+)</name>
        <dbReference type="ChEBI" id="CHEBI:29034"/>
    </ligand>
</feature>
<feature type="binding site" evidence="1">
    <location>
        <position position="74"/>
    </location>
    <ligand>
        <name>Zn(2+)</name>
        <dbReference type="ChEBI" id="CHEBI:29105"/>
    </ligand>
</feature>
<feature type="binding site" evidence="1">
    <location>
        <position position="81"/>
    </location>
    <ligand>
        <name>4-imidazolone-5-propanoate</name>
        <dbReference type="ChEBI" id="CHEBI:77893"/>
    </ligand>
</feature>
<feature type="binding site" evidence="1">
    <location>
        <position position="144"/>
    </location>
    <ligand>
        <name>4-imidazolone-5-propanoate</name>
        <dbReference type="ChEBI" id="CHEBI:77893"/>
    </ligand>
</feature>
<feature type="binding site" evidence="1">
    <location>
        <position position="144"/>
    </location>
    <ligand>
        <name>N-formimidoyl-L-glutamate</name>
        <dbReference type="ChEBI" id="CHEBI:58928"/>
    </ligand>
</feature>
<feature type="binding site" evidence="1">
    <location>
        <position position="177"/>
    </location>
    <ligand>
        <name>4-imidazolone-5-propanoate</name>
        <dbReference type="ChEBI" id="CHEBI:77893"/>
    </ligand>
</feature>
<feature type="binding site" evidence="1">
    <location>
        <position position="242"/>
    </location>
    <ligand>
        <name>Fe(3+)</name>
        <dbReference type="ChEBI" id="CHEBI:29034"/>
    </ligand>
</feature>
<feature type="binding site" evidence="1">
    <location>
        <position position="242"/>
    </location>
    <ligand>
        <name>Zn(2+)</name>
        <dbReference type="ChEBI" id="CHEBI:29105"/>
    </ligand>
</feature>
<feature type="binding site" evidence="1">
    <location>
        <position position="245"/>
    </location>
    <ligand>
        <name>4-imidazolone-5-propanoate</name>
        <dbReference type="ChEBI" id="CHEBI:77893"/>
    </ligand>
</feature>
<feature type="binding site" evidence="1">
    <location>
        <position position="317"/>
    </location>
    <ligand>
        <name>Fe(3+)</name>
        <dbReference type="ChEBI" id="CHEBI:29034"/>
    </ligand>
</feature>
<feature type="binding site" evidence="1">
    <location>
        <position position="317"/>
    </location>
    <ligand>
        <name>Zn(2+)</name>
        <dbReference type="ChEBI" id="CHEBI:29105"/>
    </ligand>
</feature>
<feature type="binding site" evidence="1">
    <location>
        <position position="319"/>
    </location>
    <ligand>
        <name>N-formimidoyl-L-glutamate</name>
        <dbReference type="ChEBI" id="CHEBI:58928"/>
    </ligand>
</feature>
<feature type="binding site" evidence="1">
    <location>
        <position position="321"/>
    </location>
    <ligand>
        <name>N-formimidoyl-L-glutamate</name>
        <dbReference type="ChEBI" id="CHEBI:58928"/>
    </ligand>
</feature>
<feature type="binding site" evidence="1">
    <location>
        <position position="322"/>
    </location>
    <ligand>
        <name>4-imidazolone-5-propanoate</name>
        <dbReference type="ChEBI" id="CHEBI:77893"/>
    </ligand>
</feature>
<gene>
    <name evidence="1" type="primary">hutI</name>
    <name type="ordered locus">YPTB1966</name>
</gene>
<proteinExistence type="inferred from homology"/>
<comment type="function">
    <text evidence="1">Catalyzes the hydrolytic cleavage of the carbon-nitrogen bond in imidazolone-5-propanoate to yield N-formimidoyl-L-glutamate. It is the third step in the universal histidine degradation pathway.</text>
</comment>
<comment type="catalytic activity">
    <reaction evidence="1">
        <text>4-imidazolone-5-propanoate + H2O = N-formimidoyl-L-glutamate</text>
        <dbReference type="Rhea" id="RHEA:23660"/>
        <dbReference type="ChEBI" id="CHEBI:15377"/>
        <dbReference type="ChEBI" id="CHEBI:58928"/>
        <dbReference type="ChEBI" id="CHEBI:77893"/>
        <dbReference type="EC" id="3.5.2.7"/>
    </reaction>
</comment>
<comment type="cofactor">
    <cofactor evidence="1">
        <name>Zn(2+)</name>
        <dbReference type="ChEBI" id="CHEBI:29105"/>
    </cofactor>
    <cofactor evidence="1">
        <name>Fe(3+)</name>
        <dbReference type="ChEBI" id="CHEBI:29034"/>
    </cofactor>
    <text evidence="1">Binds 1 zinc or iron ion per subunit.</text>
</comment>
<comment type="pathway">
    <text evidence="1">Amino-acid degradation; L-histidine degradation into L-glutamate; N-formimidoyl-L-glutamate from L-histidine: step 3/3.</text>
</comment>
<comment type="subcellular location">
    <subcellularLocation>
        <location evidence="1">Cytoplasm</location>
    </subcellularLocation>
</comment>
<comment type="similarity">
    <text evidence="1">Belongs to the metallo-dependent hydrolases superfamily. HutI family.</text>
</comment>
<sequence length="406" mass="43777">MVSVTHCDSLWFGADIITMRGGNYQLIPQGAIAVTGDKIVWIGPHAELPPIHAARQVVYEGGLITPGLIDCHTHLVFGGDRSNEFEQRLNGVSYAEIAANGGGIISTVRATRQASEQQLLEQALFRLKPLLAEGVTTIEIKSGYGLNLESEIKMLRVARRLGELLPIDVKTTCLAAHALPPEFIGQPDDYIDVVCNSIIPQVAVENLADAVDAFCEHLAFSPAQVERVFLAAQKAGLPVKLHAEQLSALRGATLAAKFHAISADHLEYATESDVQAMAKAGTVAVLLPGAYYLLRETQCPPIDLFRQYKVPMALASDANPGTSPVLSLRLMLNMACTLFRMTPEEALAGVTCHAAQALGVQQTQGTLETGKLANWVHWPLSHPAELAYWLGGQLPATVVFRGEVRP</sequence>
<keyword id="KW-0963">Cytoplasm</keyword>
<keyword id="KW-0369">Histidine metabolism</keyword>
<keyword id="KW-0378">Hydrolase</keyword>
<keyword id="KW-0408">Iron</keyword>
<keyword id="KW-0479">Metal-binding</keyword>
<keyword id="KW-0862">Zinc</keyword>
<evidence type="ECO:0000255" key="1">
    <source>
        <dbReference type="HAMAP-Rule" id="MF_00372"/>
    </source>
</evidence>
<protein>
    <recommendedName>
        <fullName evidence="1">Imidazolonepropionase</fullName>
        <ecNumber evidence="1">3.5.2.7</ecNumber>
    </recommendedName>
    <alternativeName>
        <fullName evidence="1">Imidazolone-5-propionate hydrolase</fullName>
    </alternativeName>
</protein>
<name>HUTI_YERPS</name>
<reference key="1">
    <citation type="journal article" date="2004" name="Proc. Natl. Acad. Sci. U.S.A.">
        <title>Insights into the evolution of Yersinia pestis through whole-genome comparison with Yersinia pseudotuberculosis.</title>
        <authorList>
            <person name="Chain P.S.G."/>
            <person name="Carniel E."/>
            <person name="Larimer F.W."/>
            <person name="Lamerdin J."/>
            <person name="Stoutland P.O."/>
            <person name="Regala W.M."/>
            <person name="Georgescu A.M."/>
            <person name="Vergez L.M."/>
            <person name="Land M.L."/>
            <person name="Motin V.L."/>
            <person name="Brubaker R.R."/>
            <person name="Fowler J."/>
            <person name="Hinnebusch J."/>
            <person name="Marceau M."/>
            <person name="Medigue C."/>
            <person name="Simonet M."/>
            <person name="Chenal-Francisque V."/>
            <person name="Souza B."/>
            <person name="Dacheux D."/>
            <person name="Elliott J.M."/>
            <person name="Derbise A."/>
            <person name="Hauser L.J."/>
            <person name="Garcia E."/>
        </authorList>
    </citation>
    <scope>NUCLEOTIDE SEQUENCE [LARGE SCALE GENOMIC DNA]</scope>
    <source>
        <strain>IP32953</strain>
    </source>
</reference>
<dbReference type="EC" id="3.5.2.7" evidence="1"/>
<dbReference type="EMBL" id="BX936398">
    <property type="protein sequence ID" value="CAH21204.1"/>
    <property type="molecule type" value="Genomic_DNA"/>
</dbReference>
<dbReference type="RefSeq" id="WP_011192374.1">
    <property type="nucleotide sequence ID" value="NC_006155.1"/>
</dbReference>
<dbReference type="SMR" id="Q66B14"/>
<dbReference type="GeneID" id="49786045"/>
<dbReference type="KEGG" id="ypo:BZ17_503"/>
<dbReference type="KEGG" id="yps:YPTB1966"/>
<dbReference type="PATRIC" id="fig|273123.14.peg.537"/>
<dbReference type="UniPathway" id="UPA00379">
    <property type="reaction ID" value="UER00551"/>
</dbReference>
<dbReference type="Proteomes" id="UP000001011">
    <property type="component" value="Chromosome"/>
</dbReference>
<dbReference type="GO" id="GO:0005737">
    <property type="term" value="C:cytoplasm"/>
    <property type="evidence" value="ECO:0007669"/>
    <property type="project" value="UniProtKB-SubCell"/>
</dbReference>
<dbReference type="GO" id="GO:0050480">
    <property type="term" value="F:imidazolonepropionase activity"/>
    <property type="evidence" value="ECO:0007669"/>
    <property type="project" value="UniProtKB-UniRule"/>
</dbReference>
<dbReference type="GO" id="GO:0005506">
    <property type="term" value="F:iron ion binding"/>
    <property type="evidence" value="ECO:0007669"/>
    <property type="project" value="UniProtKB-UniRule"/>
</dbReference>
<dbReference type="GO" id="GO:0008270">
    <property type="term" value="F:zinc ion binding"/>
    <property type="evidence" value="ECO:0007669"/>
    <property type="project" value="UniProtKB-UniRule"/>
</dbReference>
<dbReference type="GO" id="GO:0019556">
    <property type="term" value="P:L-histidine catabolic process to glutamate and formamide"/>
    <property type="evidence" value="ECO:0007669"/>
    <property type="project" value="UniProtKB-UniPathway"/>
</dbReference>
<dbReference type="GO" id="GO:0019557">
    <property type="term" value="P:L-histidine catabolic process to glutamate and formate"/>
    <property type="evidence" value="ECO:0007669"/>
    <property type="project" value="UniProtKB-UniPathway"/>
</dbReference>
<dbReference type="CDD" id="cd01296">
    <property type="entry name" value="Imidazolone-5PH"/>
    <property type="match status" value="1"/>
</dbReference>
<dbReference type="FunFam" id="3.20.20.140:FF:000007">
    <property type="entry name" value="Imidazolonepropionase"/>
    <property type="match status" value="1"/>
</dbReference>
<dbReference type="Gene3D" id="3.20.20.140">
    <property type="entry name" value="Metal-dependent hydrolases"/>
    <property type="match status" value="1"/>
</dbReference>
<dbReference type="Gene3D" id="2.30.40.10">
    <property type="entry name" value="Urease, subunit C, domain 1"/>
    <property type="match status" value="1"/>
</dbReference>
<dbReference type="HAMAP" id="MF_00372">
    <property type="entry name" value="HutI"/>
    <property type="match status" value="1"/>
</dbReference>
<dbReference type="InterPro" id="IPR006680">
    <property type="entry name" value="Amidohydro-rel"/>
</dbReference>
<dbReference type="InterPro" id="IPR005920">
    <property type="entry name" value="HutI"/>
</dbReference>
<dbReference type="InterPro" id="IPR011059">
    <property type="entry name" value="Metal-dep_hydrolase_composite"/>
</dbReference>
<dbReference type="InterPro" id="IPR032466">
    <property type="entry name" value="Metal_Hydrolase"/>
</dbReference>
<dbReference type="NCBIfam" id="TIGR01224">
    <property type="entry name" value="hutI"/>
    <property type="match status" value="1"/>
</dbReference>
<dbReference type="PANTHER" id="PTHR42752">
    <property type="entry name" value="IMIDAZOLONEPROPIONASE"/>
    <property type="match status" value="1"/>
</dbReference>
<dbReference type="PANTHER" id="PTHR42752:SF1">
    <property type="entry name" value="IMIDAZOLONEPROPIONASE-RELATED"/>
    <property type="match status" value="1"/>
</dbReference>
<dbReference type="Pfam" id="PF01979">
    <property type="entry name" value="Amidohydro_1"/>
    <property type="match status" value="1"/>
</dbReference>
<dbReference type="SUPFAM" id="SSF51338">
    <property type="entry name" value="Composite domain of metallo-dependent hydrolases"/>
    <property type="match status" value="1"/>
</dbReference>
<dbReference type="SUPFAM" id="SSF51556">
    <property type="entry name" value="Metallo-dependent hydrolases"/>
    <property type="match status" value="1"/>
</dbReference>
<accession>Q66B14</accession>
<organism>
    <name type="scientific">Yersinia pseudotuberculosis serotype I (strain IP32953)</name>
    <dbReference type="NCBI Taxonomy" id="273123"/>
    <lineage>
        <taxon>Bacteria</taxon>
        <taxon>Pseudomonadati</taxon>
        <taxon>Pseudomonadota</taxon>
        <taxon>Gammaproteobacteria</taxon>
        <taxon>Enterobacterales</taxon>
        <taxon>Yersiniaceae</taxon>
        <taxon>Yersinia</taxon>
    </lineage>
</organism>